<evidence type="ECO:0000255" key="1">
    <source>
        <dbReference type="HAMAP-Rule" id="MF_00816"/>
    </source>
</evidence>
<comment type="similarity">
    <text evidence="1">Belongs to the UPF0352 family.</text>
</comment>
<protein>
    <recommendedName>
        <fullName evidence="1">UPF0352 protein YpAngola_A1485</fullName>
    </recommendedName>
</protein>
<sequence>MPQSSRYSDEHVEQLLSELVSVLEKHRTPTDLSLMVLGNMVTNLINTSIAPAQRKVLARSFAEALQASVREDKAH</sequence>
<feature type="chain" id="PRO_1000199605" description="UPF0352 protein YpAngola_A1485">
    <location>
        <begin position="1"/>
        <end position="75"/>
    </location>
</feature>
<accession>A9R3I1</accession>
<dbReference type="EMBL" id="CP000901">
    <property type="protein sequence ID" value="ABX86042.1"/>
    <property type="molecule type" value="Genomic_DNA"/>
</dbReference>
<dbReference type="RefSeq" id="WP_002208836.1">
    <property type="nucleotide sequence ID" value="NZ_CP009935.1"/>
</dbReference>
<dbReference type="SMR" id="A9R3I1"/>
<dbReference type="KEGG" id="ypg:YpAngola_A1485"/>
<dbReference type="PATRIC" id="fig|349746.12.peg.2451"/>
<dbReference type="Gene3D" id="1.10.3390.10">
    <property type="entry name" value="YejL-like"/>
    <property type="match status" value="1"/>
</dbReference>
<dbReference type="HAMAP" id="MF_00816">
    <property type="entry name" value="UPF0352"/>
    <property type="match status" value="1"/>
</dbReference>
<dbReference type="InterPro" id="IPR009857">
    <property type="entry name" value="UPF0352"/>
</dbReference>
<dbReference type="InterPro" id="IPR023202">
    <property type="entry name" value="YejL_sf"/>
</dbReference>
<dbReference type="NCBIfam" id="NF010242">
    <property type="entry name" value="PRK13689.1"/>
    <property type="match status" value="1"/>
</dbReference>
<dbReference type="Pfam" id="PF07208">
    <property type="entry name" value="DUF1414"/>
    <property type="match status" value="1"/>
</dbReference>
<dbReference type="PIRSF" id="PIRSF006188">
    <property type="entry name" value="UCP006188"/>
    <property type="match status" value="1"/>
</dbReference>
<dbReference type="SUPFAM" id="SSF158651">
    <property type="entry name" value="YejL-like"/>
    <property type="match status" value="1"/>
</dbReference>
<reference key="1">
    <citation type="journal article" date="2010" name="J. Bacteriol.">
        <title>Genome sequence of the deep-rooted Yersinia pestis strain Angola reveals new insights into the evolution and pangenome of the plague bacterium.</title>
        <authorList>
            <person name="Eppinger M."/>
            <person name="Worsham P.L."/>
            <person name="Nikolich M.P."/>
            <person name="Riley D.R."/>
            <person name="Sebastian Y."/>
            <person name="Mou S."/>
            <person name="Achtman M."/>
            <person name="Lindler L.E."/>
            <person name="Ravel J."/>
        </authorList>
    </citation>
    <scope>NUCLEOTIDE SEQUENCE [LARGE SCALE GENOMIC DNA]</scope>
    <source>
        <strain>Angola</strain>
    </source>
</reference>
<name>Y1485_YERPG</name>
<gene>
    <name type="ordered locus">YpAngola_A1485</name>
</gene>
<organism>
    <name type="scientific">Yersinia pestis bv. Antiqua (strain Angola)</name>
    <dbReference type="NCBI Taxonomy" id="349746"/>
    <lineage>
        <taxon>Bacteria</taxon>
        <taxon>Pseudomonadati</taxon>
        <taxon>Pseudomonadota</taxon>
        <taxon>Gammaproteobacteria</taxon>
        <taxon>Enterobacterales</taxon>
        <taxon>Yersiniaceae</taxon>
        <taxon>Yersinia</taxon>
    </lineage>
</organism>
<proteinExistence type="inferred from homology"/>